<comment type="function">
    <text evidence="1">RuBisCO catalyzes two reactions: the carboxylation of D-ribulose 1,5-bisphosphate, the primary event in carbon dioxide fixation, as well as the oxidative fragmentation of the pentose substrate in the photorespiration process. Both reactions occur simultaneously and in competition at the same active site.</text>
</comment>
<comment type="catalytic activity">
    <reaction evidence="1">
        <text>2 (2R)-3-phosphoglycerate + 2 H(+) = D-ribulose 1,5-bisphosphate + CO2 + H2O</text>
        <dbReference type="Rhea" id="RHEA:23124"/>
        <dbReference type="ChEBI" id="CHEBI:15377"/>
        <dbReference type="ChEBI" id="CHEBI:15378"/>
        <dbReference type="ChEBI" id="CHEBI:16526"/>
        <dbReference type="ChEBI" id="CHEBI:57870"/>
        <dbReference type="ChEBI" id="CHEBI:58272"/>
        <dbReference type="EC" id="4.1.1.39"/>
    </reaction>
</comment>
<comment type="catalytic activity">
    <reaction evidence="1">
        <text>D-ribulose 1,5-bisphosphate + O2 = 2-phosphoglycolate + (2R)-3-phosphoglycerate + 2 H(+)</text>
        <dbReference type="Rhea" id="RHEA:36631"/>
        <dbReference type="ChEBI" id="CHEBI:15378"/>
        <dbReference type="ChEBI" id="CHEBI:15379"/>
        <dbReference type="ChEBI" id="CHEBI:57870"/>
        <dbReference type="ChEBI" id="CHEBI:58033"/>
        <dbReference type="ChEBI" id="CHEBI:58272"/>
    </reaction>
</comment>
<comment type="cofactor">
    <cofactor evidence="1">
        <name>Mg(2+)</name>
        <dbReference type="ChEBI" id="CHEBI:18420"/>
    </cofactor>
    <text evidence="1">Binds 1 Mg(2+) ion per subunit.</text>
</comment>
<comment type="subunit">
    <text evidence="1">Heterohexadecamer of 8 large chains and 8 small chains; disulfide-linked. The disulfide link is formed within the large subunit homodimers.</text>
</comment>
<comment type="subcellular location">
    <subcellularLocation>
        <location>Plastid</location>
        <location>Chloroplast</location>
    </subcellularLocation>
</comment>
<comment type="PTM">
    <text evidence="1">The disulfide bond which can form in the large chain dimeric partners within the hexadecamer appears to be associated with oxidative stress and protein turnover.</text>
</comment>
<comment type="miscellaneous">
    <text evidence="1">The basic functional RuBisCO is composed of a large chain homodimer in a 'head-to-tail' conformation. In form I RuBisCO this homodimer is arranged in a barrel-like tetramer with the small subunits forming a tetrameric 'cap' on each end of the 'barrel'.</text>
</comment>
<comment type="similarity">
    <text evidence="1">Belongs to the RuBisCO large chain family. Type I subfamily.</text>
</comment>
<evidence type="ECO:0000255" key="1">
    <source>
        <dbReference type="HAMAP-Rule" id="MF_01338"/>
    </source>
</evidence>
<accession>P69577</accession>
<accession>P52775</accession>
<protein>
    <recommendedName>
        <fullName evidence="1">Ribulose bisphosphate carboxylase large chain</fullName>
        <shortName evidence="1">RuBisCO large subunit</shortName>
        <ecNumber evidence="1">4.1.1.39</ecNumber>
    </recommendedName>
</protein>
<keyword id="KW-0113">Calvin cycle</keyword>
<keyword id="KW-0120">Carbon dioxide fixation</keyword>
<keyword id="KW-0150">Chloroplast</keyword>
<keyword id="KW-1015">Disulfide bond</keyword>
<keyword id="KW-0456">Lyase</keyword>
<keyword id="KW-0460">Magnesium</keyword>
<keyword id="KW-0479">Metal-binding</keyword>
<keyword id="KW-0488">Methylation</keyword>
<keyword id="KW-0503">Monooxygenase</keyword>
<keyword id="KW-0560">Oxidoreductase</keyword>
<keyword id="KW-0601">Photorespiration</keyword>
<keyword id="KW-0602">Photosynthesis</keyword>
<keyword id="KW-0934">Plastid</keyword>
<proteinExistence type="inferred from homology"/>
<name>RBL_LUPAT</name>
<geneLocation type="chloroplast"/>
<organism>
    <name type="scientific">Lupinus arcticus</name>
    <name type="common">Arctic lupine</name>
    <dbReference type="NCBI Taxonomy" id="53215"/>
    <lineage>
        <taxon>Eukaryota</taxon>
        <taxon>Viridiplantae</taxon>
        <taxon>Streptophyta</taxon>
        <taxon>Embryophyta</taxon>
        <taxon>Tracheophyta</taxon>
        <taxon>Spermatophyta</taxon>
        <taxon>Magnoliopsida</taxon>
        <taxon>eudicotyledons</taxon>
        <taxon>Gunneridae</taxon>
        <taxon>Pentapetalae</taxon>
        <taxon>rosids</taxon>
        <taxon>fabids</taxon>
        <taxon>Fabales</taxon>
        <taxon>Fabaceae</taxon>
        <taxon>Papilionoideae</taxon>
        <taxon>50 kb inversion clade</taxon>
        <taxon>genistoids sensu lato</taxon>
        <taxon>core genistoids</taxon>
        <taxon>Genisteae</taxon>
        <taxon>Lupinus</taxon>
    </lineage>
</organism>
<dbReference type="EC" id="4.1.1.39" evidence="1"/>
<dbReference type="EMBL" id="Z70055">
    <property type="protein sequence ID" value="CAA93914.1"/>
    <property type="molecule type" value="Genomic_DNA"/>
</dbReference>
<dbReference type="SMR" id="P69577"/>
<dbReference type="GO" id="GO:0009507">
    <property type="term" value="C:chloroplast"/>
    <property type="evidence" value="ECO:0007669"/>
    <property type="project" value="UniProtKB-SubCell"/>
</dbReference>
<dbReference type="GO" id="GO:0000287">
    <property type="term" value="F:magnesium ion binding"/>
    <property type="evidence" value="ECO:0007669"/>
    <property type="project" value="InterPro"/>
</dbReference>
<dbReference type="GO" id="GO:0004497">
    <property type="term" value="F:monooxygenase activity"/>
    <property type="evidence" value="ECO:0007669"/>
    <property type="project" value="UniProtKB-KW"/>
</dbReference>
<dbReference type="GO" id="GO:0016984">
    <property type="term" value="F:ribulose-bisphosphate carboxylase activity"/>
    <property type="evidence" value="ECO:0007669"/>
    <property type="project" value="UniProtKB-EC"/>
</dbReference>
<dbReference type="GO" id="GO:0009853">
    <property type="term" value="P:photorespiration"/>
    <property type="evidence" value="ECO:0007669"/>
    <property type="project" value="UniProtKB-KW"/>
</dbReference>
<dbReference type="GO" id="GO:0019253">
    <property type="term" value="P:reductive pentose-phosphate cycle"/>
    <property type="evidence" value="ECO:0007669"/>
    <property type="project" value="UniProtKB-KW"/>
</dbReference>
<dbReference type="CDD" id="cd08212">
    <property type="entry name" value="RuBisCO_large_I"/>
    <property type="match status" value="1"/>
</dbReference>
<dbReference type="FunFam" id="3.20.20.110:FF:000001">
    <property type="entry name" value="Ribulose bisphosphate carboxylase large chain"/>
    <property type="match status" value="1"/>
</dbReference>
<dbReference type="FunFam" id="3.30.70.150:FF:000001">
    <property type="entry name" value="Ribulose bisphosphate carboxylase large chain"/>
    <property type="match status" value="1"/>
</dbReference>
<dbReference type="Gene3D" id="3.20.20.110">
    <property type="entry name" value="Ribulose bisphosphate carboxylase, large subunit, C-terminal domain"/>
    <property type="match status" value="1"/>
</dbReference>
<dbReference type="Gene3D" id="3.30.70.150">
    <property type="entry name" value="RuBisCO large subunit, N-terminal domain"/>
    <property type="match status" value="1"/>
</dbReference>
<dbReference type="HAMAP" id="MF_01338">
    <property type="entry name" value="RuBisCO_L_type1"/>
    <property type="match status" value="1"/>
</dbReference>
<dbReference type="InterPro" id="IPR033966">
    <property type="entry name" value="RuBisCO"/>
</dbReference>
<dbReference type="InterPro" id="IPR020878">
    <property type="entry name" value="RuBisCo_large_chain_AS"/>
</dbReference>
<dbReference type="InterPro" id="IPR000685">
    <property type="entry name" value="RuBisCO_lsu_C"/>
</dbReference>
<dbReference type="InterPro" id="IPR036376">
    <property type="entry name" value="RuBisCO_lsu_C_sf"/>
</dbReference>
<dbReference type="InterPro" id="IPR017443">
    <property type="entry name" value="RuBisCO_lsu_fd_N"/>
</dbReference>
<dbReference type="InterPro" id="IPR036422">
    <property type="entry name" value="RuBisCO_lsu_N_sf"/>
</dbReference>
<dbReference type="InterPro" id="IPR020888">
    <property type="entry name" value="RuBisCO_lsuI"/>
</dbReference>
<dbReference type="NCBIfam" id="NF003252">
    <property type="entry name" value="PRK04208.1"/>
    <property type="match status" value="1"/>
</dbReference>
<dbReference type="PANTHER" id="PTHR42704">
    <property type="entry name" value="RIBULOSE BISPHOSPHATE CARBOXYLASE"/>
    <property type="match status" value="1"/>
</dbReference>
<dbReference type="PANTHER" id="PTHR42704:SF16">
    <property type="entry name" value="RIBULOSE BISPHOSPHATE CARBOXYLASE LARGE CHAIN"/>
    <property type="match status" value="1"/>
</dbReference>
<dbReference type="Pfam" id="PF00016">
    <property type="entry name" value="RuBisCO_large"/>
    <property type="match status" value="1"/>
</dbReference>
<dbReference type="Pfam" id="PF02788">
    <property type="entry name" value="RuBisCO_large_N"/>
    <property type="match status" value="1"/>
</dbReference>
<dbReference type="SFLD" id="SFLDG01052">
    <property type="entry name" value="RuBisCO"/>
    <property type="match status" value="1"/>
</dbReference>
<dbReference type="SFLD" id="SFLDS00014">
    <property type="entry name" value="RuBisCO"/>
    <property type="match status" value="1"/>
</dbReference>
<dbReference type="SFLD" id="SFLDG00301">
    <property type="entry name" value="RuBisCO-like_proteins"/>
    <property type="match status" value="1"/>
</dbReference>
<dbReference type="SUPFAM" id="SSF51649">
    <property type="entry name" value="RuBisCo, C-terminal domain"/>
    <property type="match status" value="1"/>
</dbReference>
<dbReference type="SUPFAM" id="SSF54966">
    <property type="entry name" value="RuBisCO, large subunit, small (N-terminal) domain"/>
    <property type="match status" value="1"/>
</dbReference>
<dbReference type="PROSITE" id="PS00157">
    <property type="entry name" value="RUBISCO_LARGE"/>
    <property type="match status" value="1"/>
</dbReference>
<reference key="1">
    <citation type="journal article" date="1995" name="Bot. Acta">
        <title>Molecular phylogeny of the Papilionoideae (family Leguminosae): rbcL sequences versus chemical taxonomy.</title>
        <authorList>
            <person name="Kaess E."/>
            <person name="Wink M."/>
        </authorList>
    </citation>
    <scope>NUCLEOTIDE SEQUENCE [GENOMIC DNA]</scope>
    <source>
        <tissue>Leaf</tissue>
    </source>
</reference>
<gene>
    <name evidence="1" type="primary">rbcL</name>
</gene>
<feature type="chain" id="PRO_0000062511" description="Ribulose bisphosphate carboxylase large chain">
    <location>
        <begin position="1" status="less than"/>
        <end position="455" status="greater than"/>
    </location>
</feature>
<feature type="active site" description="Proton acceptor" evidence="1">
    <location>
        <position position="166"/>
    </location>
</feature>
<feature type="active site" description="Proton acceptor" evidence="1">
    <location>
        <position position="285"/>
    </location>
</feature>
<feature type="binding site" description="in homodimeric partner" evidence="1">
    <location>
        <position position="114"/>
    </location>
    <ligand>
        <name>substrate</name>
    </ligand>
</feature>
<feature type="binding site" evidence="1">
    <location>
        <position position="164"/>
    </location>
    <ligand>
        <name>substrate</name>
    </ligand>
</feature>
<feature type="binding site" evidence="1">
    <location>
        <position position="168"/>
    </location>
    <ligand>
        <name>substrate</name>
    </ligand>
</feature>
<feature type="binding site" description="via carbamate group" evidence="1">
    <location>
        <position position="192"/>
    </location>
    <ligand>
        <name>Mg(2+)</name>
        <dbReference type="ChEBI" id="CHEBI:18420"/>
    </ligand>
</feature>
<feature type="binding site" evidence="1">
    <location>
        <position position="194"/>
    </location>
    <ligand>
        <name>Mg(2+)</name>
        <dbReference type="ChEBI" id="CHEBI:18420"/>
    </ligand>
</feature>
<feature type="binding site" evidence="1">
    <location>
        <position position="195"/>
    </location>
    <ligand>
        <name>Mg(2+)</name>
        <dbReference type="ChEBI" id="CHEBI:18420"/>
    </ligand>
</feature>
<feature type="binding site" evidence="1">
    <location>
        <position position="286"/>
    </location>
    <ligand>
        <name>substrate</name>
    </ligand>
</feature>
<feature type="binding site" evidence="1">
    <location>
        <position position="318"/>
    </location>
    <ligand>
        <name>substrate</name>
    </ligand>
</feature>
<feature type="binding site" evidence="1">
    <location>
        <position position="370"/>
    </location>
    <ligand>
        <name>substrate</name>
    </ligand>
</feature>
<feature type="site" description="Transition state stabilizer" evidence="1">
    <location>
        <position position="325"/>
    </location>
</feature>
<feature type="modified residue" description="N6,N6,N6-trimethyllysine" evidence="1">
    <location>
        <position position="5"/>
    </location>
</feature>
<feature type="modified residue" description="N6-carboxylysine" evidence="1">
    <location>
        <position position="192"/>
    </location>
</feature>
<feature type="disulfide bond" description="Interchain; in linked form" evidence="1">
    <location>
        <position position="238"/>
    </location>
</feature>
<feature type="non-terminal residue">
    <location>
        <position position="1"/>
    </location>
</feature>
<feature type="non-terminal residue">
    <location>
        <position position="455"/>
    </location>
</feature>
<sequence>SVGFKAGVKDYKLTYYTPDYKTKDTDILAAFRVTPQPGVPPEEAGAAVAAESSTGTWTTVWTDGLTSLDRYKGRCYHIEPVAGEESQFIAYVAYPLDLFEEGSVTNMFTSIVGNVFGFKALRALRLEDLRIPNAYVKTFQGPPHGIQVERDKLNKYGRPLLGCTIKPKLGLSAKNYGRAVYECLRGGLDFTKDDENVNSQPFMRWRDRFLFCAEALYKAQAETGEIKGHYLNATAGTCEEMIKRAVFARELGVPIVMHDYLTGGFTANTTLSHYCRDNGLLLHIHRAMHAVIDRQKNHGMHFRVLAKALRLSGGDHIHSGTVVGKLEGEREITLGFVDLLRDDFVEKDRSRGIYFTQDWVSLPGVLPVASGGIHVWHMPALTEIFGDDSVLQFGGGTLGHPWGNAPGAVANRVALEACVQARNEGRDLASEGNQIIREASKWSPELAAACEVWKE</sequence>